<comment type="function">
    <text>Carrier of the growing fatty acid chain in fatty acid biosynthesis.</text>
</comment>
<comment type="pathway">
    <text evidence="2">Lipid metabolism; fatty acid biosynthesis.</text>
</comment>
<comment type="subcellular location">
    <subcellularLocation>
        <location evidence="2">Cytoplasm</location>
    </subcellularLocation>
</comment>
<comment type="PTM">
    <text>4'-phosphopantetheine is transferred from CoA to a specific serine of apo-ACP by AcpS. This modification is essential for activity because fatty acids are bound in thioester linkage to the sulfhydryl of the prosthetic group.</text>
</comment>
<comment type="similarity">
    <text evidence="2">Belongs to the acyl carrier protein (ACP) family.</text>
</comment>
<feature type="initiator methionine" description="Removed" evidence="1">
    <location>
        <position position="1"/>
    </location>
</feature>
<feature type="chain" id="PRO_0000180174" description="Acyl carrier protein AcpP">
    <location>
        <begin position="2"/>
        <end position="78"/>
    </location>
</feature>
<feature type="domain" description="Carrier" evidence="3">
    <location>
        <begin position="2"/>
        <end position="77"/>
    </location>
</feature>
<feature type="modified residue" description="O-(pantetheine 4'-phosphoryl)serine" evidence="3">
    <location>
        <position position="37"/>
    </location>
</feature>
<reference key="1">
    <citation type="journal article" date="2000" name="Microbiology">
        <title>Expression and purification of four different rhizobial acyl carrier proteins.</title>
        <authorList>
            <person name="Lopez-Lara I.M."/>
            <person name="Geiger O."/>
        </authorList>
    </citation>
    <scope>NUCLEOTIDE SEQUENCE [GENOMIC DNA]</scope>
    <source>
        <strain>LPR5045</strain>
    </source>
</reference>
<accession>Q9RG22</accession>
<organism>
    <name type="scientific">Rhizobium leguminosarum</name>
    <dbReference type="NCBI Taxonomy" id="384"/>
    <lineage>
        <taxon>Bacteria</taxon>
        <taxon>Pseudomonadati</taxon>
        <taxon>Pseudomonadota</taxon>
        <taxon>Alphaproteobacteria</taxon>
        <taxon>Hyphomicrobiales</taxon>
        <taxon>Rhizobiaceae</taxon>
        <taxon>Rhizobium/Agrobacterium group</taxon>
        <taxon>Rhizobium</taxon>
    </lineage>
</organism>
<name>ACP_RHILE</name>
<proteinExistence type="inferred from homology"/>
<gene>
    <name evidence="2" type="primary">acpP</name>
</gene>
<protein>
    <recommendedName>
        <fullName evidence="2">Acyl carrier protein AcpP</fullName>
        <shortName evidence="2">ACP</shortName>
    </recommendedName>
</protein>
<sequence>MSDIAERVKKIVIDHLGVDADKVVESASFIDDLGADSLDTVELVMAFEEEFGVEIPDDAADSILTVGDAVKFIEKAQA</sequence>
<keyword id="KW-0963">Cytoplasm</keyword>
<keyword id="KW-0275">Fatty acid biosynthesis</keyword>
<keyword id="KW-0276">Fatty acid metabolism</keyword>
<keyword id="KW-0444">Lipid biosynthesis</keyword>
<keyword id="KW-0443">Lipid metabolism</keyword>
<keyword id="KW-0596">Phosphopantetheine</keyword>
<keyword id="KW-0597">Phosphoprotein</keyword>
<evidence type="ECO:0000250" key="1"/>
<evidence type="ECO:0000255" key="2">
    <source>
        <dbReference type="HAMAP-Rule" id="MF_01217"/>
    </source>
</evidence>
<evidence type="ECO:0000255" key="3">
    <source>
        <dbReference type="PROSITE-ProRule" id="PRU00258"/>
    </source>
</evidence>
<dbReference type="EMBL" id="AF159243">
    <property type="protein sequence ID" value="AAF24179.1"/>
    <property type="molecule type" value="Genomic_DNA"/>
</dbReference>
<dbReference type="RefSeq" id="WP_003547058.1">
    <property type="nucleotide sequence ID" value="NZ_WXXP01000007.1"/>
</dbReference>
<dbReference type="SMR" id="Q9RG22"/>
<dbReference type="eggNOG" id="COG0236">
    <property type="taxonomic scope" value="Bacteria"/>
</dbReference>
<dbReference type="OMA" id="TMEASFI"/>
<dbReference type="OrthoDB" id="9804551at2"/>
<dbReference type="UniPathway" id="UPA00094"/>
<dbReference type="GO" id="GO:0005829">
    <property type="term" value="C:cytosol"/>
    <property type="evidence" value="ECO:0007669"/>
    <property type="project" value="TreeGrafter"/>
</dbReference>
<dbReference type="GO" id="GO:0016020">
    <property type="term" value="C:membrane"/>
    <property type="evidence" value="ECO:0007669"/>
    <property type="project" value="GOC"/>
</dbReference>
<dbReference type="GO" id="GO:0000035">
    <property type="term" value="F:acyl binding"/>
    <property type="evidence" value="ECO:0007669"/>
    <property type="project" value="TreeGrafter"/>
</dbReference>
<dbReference type="GO" id="GO:0000036">
    <property type="term" value="F:acyl carrier activity"/>
    <property type="evidence" value="ECO:0007669"/>
    <property type="project" value="UniProtKB-UniRule"/>
</dbReference>
<dbReference type="GO" id="GO:0031177">
    <property type="term" value="F:phosphopantetheine binding"/>
    <property type="evidence" value="ECO:0007669"/>
    <property type="project" value="InterPro"/>
</dbReference>
<dbReference type="GO" id="GO:0009245">
    <property type="term" value="P:lipid A biosynthetic process"/>
    <property type="evidence" value="ECO:0007669"/>
    <property type="project" value="TreeGrafter"/>
</dbReference>
<dbReference type="FunFam" id="1.10.1200.10:FF:000001">
    <property type="entry name" value="Acyl carrier protein"/>
    <property type="match status" value="1"/>
</dbReference>
<dbReference type="Gene3D" id="1.10.1200.10">
    <property type="entry name" value="ACP-like"/>
    <property type="match status" value="1"/>
</dbReference>
<dbReference type="HAMAP" id="MF_01217">
    <property type="entry name" value="Acyl_carrier"/>
    <property type="match status" value="1"/>
</dbReference>
<dbReference type="InterPro" id="IPR003231">
    <property type="entry name" value="ACP"/>
</dbReference>
<dbReference type="InterPro" id="IPR036736">
    <property type="entry name" value="ACP-like_sf"/>
</dbReference>
<dbReference type="InterPro" id="IPR020806">
    <property type="entry name" value="PKS_PP-bd"/>
</dbReference>
<dbReference type="InterPro" id="IPR009081">
    <property type="entry name" value="PP-bd_ACP"/>
</dbReference>
<dbReference type="InterPro" id="IPR006162">
    <property type="entry name" value="Ppantetheine_attach_site"/>
</dbReference>
<dbReference type="NCBIfam" id="TIGR00517">
    <property type="entry name" value="acyl_carrier"/>
    <property type="match status" value="1"/>
</dbReference>
<dbReference type="NCBIfam" id="NF002148">
    <property type="entry name" value="PRK00982.1-2"/>
    <property type="match status" value="1"/>
</dbReference>
<dbReference type="NCBIfam" id="NF002149">
    <property type="entry name" value="PRK00982.1-3"/>
    <property type="match status" value="1"/>
</dbReference>
<dbReference type="NCBIfam" id="NF002150">
    <property type="entry name" value="PRK00982.1-4"/>
    <property type="match status" value="1"/>
</dbReference>
<dbReference type="NCBIfam" id="NF002151">
    <property type="entry name" value="PRK00982.1-5"/>
    <property type="match status" value="1"/>
</dbReference>
<dbReference type="PANTHER" id="PTHR20863">
    <property type="entry name" value="ACYL CARRIER PROTEIN"/>
    <property type="match status" value="1"/>
</dbReference>
<dbReference type="PANTHER" id="PTHR20863:SF76">
    <property type="entry name" value="CARRIER DOMAIN-CONTAINING PROTEIN"/>
    <property type="match status" value="1"/>
</dbReference>
<dbReference type="Pfam" id="PF00550">
    <property type="entry name" value="PP-binding"/>
    <property type="match status" value="1"/>
</dbReference>
<dbReference type="SMART" id="SM00823">
    <property type="entry name" value="PKS_PP"/>
    <property type="match status" value="1"/>
</dbReference>
<dbReference type="SUPFAM" id="SSF47336">
    <property type="entry name" value="ACP-like"/>
    <property type="match status" value="1"/>
</dbReference>
<dbReference type="PROSITE" id="PS50075">
    <property type="entry name" value="CARRIER"/>
    <property type="match status" value="1"/>
</dbReference>
<dbReference type="PROSITE" id="PS00012">
    <property type="entry name" value="PHOSPHOPANTETHEINE"/>
    <property type="match status" value="1"/>
</dbReference>